<name>RVE2_ARATH</name>
<feature type="chain" id="PRO_0000424836" description="Protein REVEILLE 2">
    <location>
        <begin position="1"/>
        <end position="287"/>
    </location>
</feature>
<feature type="domain" description="HTH myb-type" evidence="1">
    <location>
        <begin position="31"/>
        <end position="85"/>
    </location>
</feature>
<feature type="DNA-binding region" description="H-T-H motif" evidence="1">
    <location>
        <begin position="58"/>
        <end position="81"/>
    </location>
</feature>
<feature type="region of interest" description="Disordered" evidence="2">
    <location>
        <begin position="134"/>
        <end position="177"/>
    </location>
</feature>
<feature type="compositionally biased region" description="Low complexity" evidence="2">
    <location>
        <begin position="156"/>
        <end position="169"/>
    </location>
</feature>
<feature type="sequence conflict" description="In Ref. 1; AAS09985." evidence="6" ref="1">
    <original>N</original>
    <variation>D</variation>
    <location>
        <position position="230"/>
    </location>
</feature>
<accession>F4K5X6</accession>
<accession>Q6NML6</accession>
<accession>Q6R0G3</accession>
<comment type="function">
    <text evidence="3 5">Positive regulator for cold-responsive gene expression and cold tolerance. Part of a regulatory feedback loop that controls a subset of the circadian outputs and modulates the central oscillator. Negatively self-regulates its own expression.</text>
</comment>
<comment type="interaction">
    <interactant intactId="EBI-15194007">
        <id>F4K5X6</id>
    </interactant>
    <interactant intactId="EBI-15192731">
        <id>A1YKT1</id>
        <label>TCP18</label>
    </interactant>
    <organismsDiffer>false</organismsDiffer>
    <experiments>3</experiments>
</comment>
<comment type="interaction">
    <interactant intactId="EBI-15194007">
        <id>F4K5X6</id>
    </interactant>
    <interactant intactId="EBI-1806405">
        <id>Q9LXG0</id>
        <label>ZHD8</label>
    </interactant>
    <organismsDiffer>false</organismsDiffer>
    <experiments>3</experiments>
</comment>
<comment type="subcellular location">
    <subcellularLocation>
        <location evidence="1">Nucleus</location>
    </subcellularLocation>
</comment>
<comment type="induction">
    <text evidence="3 4">Circadian-regulation. Peak of transcript abundance near subjective dawn. Up-regulated transiently by light.</text>
</comment>
<comment type="disruption phenotype">
    <text evidence="3 4 5">No effect on the regulation of core clock associated genes or on the hypocotyl length, but hypersensitivity to freezing stress and slightly earlier-flowering phenotype. Rve1 and rve2 double mutant has no alteration in the period or phase of the clock. Rve1, rve2 and rve7 triple mutant has no alteration in the period or phase of the clock.</text>
</comment>
<comment type="miscellaneous">
    <text evidence="7 8">Regulated at the level of mRNA maturation by RH42 (PubMed:23371945). The RVE2 pre-mRNA can be alternatively spliced, generating a poison cassette exon that harbors an very early in-frame premature termination codon. The resulting severely truncated mRNA is not efficiently translated (PubMed:22747664).</text>
</comment>
<comment type="sequence caution" evidence="6">
    <conflict type="erroneous initiation">
        <sequence resource="EMBL-CDS" id="AAR24725"/>
    </conflict>
    <text>Truncated N-terminus.</text>
</comment>
<comment type="sequence caution" evidence="6">
    <conflict type="erroneous initiation">
        <sequence resource="EMBL-CDS" id="AAS47647"/>
    </conflict>
    <text>Truncated N-terminus.</text>
</comment>
<protein>
    <recommendedName>
        <fullName>Protein REVEILLE 2</fullName>
    </recommendedName>
    <alternativeName>
        <fullName>MYB family transcription factor Circadian 1</fullName>
    </alternativeName>
</protein>
<keyword id="KW-0090">Biological rhythms</keyword>
<keyword id="KW-0238">DNA-binding</keyword>
<keyword id="KW-0539">Nucleus</keyword>
<keyword id="KW-1185">Reference proteome</keyword>
<keyword id="KW-0804">Transcription</keyword>
<keyword id="KW-0805">Transcription regulation</keyword>
<organism>
    <name type="scientific">Arabidopsis thaliana</name>
    <name type="common">Mouse-ear cress</name>
    <dbReference type="NCBI Taxonomy" id="3702"/>
    <lineage>
        <taxon>Eukaryota</taxon>
        <taxon>Viridiplantae</taxon>
        <taxon>Streptophyta</taxon>
        <taxon>Embryophyta</taxon>
        <taxon>Tracheophyta</taxon>
        <taxon>Spermatophyta</taxon>
        <taxon>Magnoliopsida</taxon>
        <taxon>eudicotyledons</taxon>
        <taxon>Gunneridae</taxon>
        <taxon>Pentapetalae</taxon>
        <taxon>rosids</taxon>
        <taxon>malvids</taxon>
        <taxon>Brassicales</taxon>
        <taxon>Brassicaceae</taxon>
        <taxon>Camelineae</taxon>
        <taxon>Arabidopsis</taxon>
    </lineage>
</organism>
<evidence type="ECO:0000255" key="1">
    <source>
        <dbReference type="PROSITE-ProRule" id="PRU00625"/>
    </source>
</evidence>
<evidence type="ECO:0000256" key="2">
    <source>
        <dbReference type="SAM" id="MobiDB-lite"/>
    </source>
</evidence>
<evidence type="ECO:0000269" key="3">
    <source>
    </source>
</evidence>
<evidence type="ECO:0000269" key="4">
    <source>
    </source>
</evidence>
<evidence type="ECO:0000269" key="5">
    <source>
    </source>
</evidence>
<evidence type="ECO:0000305" key="6"/>
<evidence type="ECO:0000305" key="7">
    <source>
    </source>
</evidence>
<evidence type="ECO:0000305" key="8">
    <source>
    </source>
</evidence>
<dbReference type="EMBL" id="AY519515">
    <property type="protein sequence ID" value="AAS09985.1"/>
    <property type="molecule type" value="mRNA"/>
</dbReference>
<dbReference type="EMBL" id="AB017069">
    <property type="status" value="NOT_ANNOTATED_CDS"/>
    <property type="molecule type" value="Genomic_DNA"/>
</dbReference>
<dbReference type="EMBL" id="CP002688">
    <property type="protein sequence ID" value="AED94158.1"/>
    <property type="molecule type" value="Genomic_DNA"/>
</dbReference>
<dbReference type="EMBL" id="BT010947">
    <property type="protein sequence ID" value="AAR24725.1"/>
    <property type="status" value="ALT_INIT"/>
    <property type="molecule type" value="mRNA"/>
</dbReference>
<dbReference type="EMBL" id="BT011641">
    <property type="protein sequence ID" value="AAS47647.1"/>
    <property type="status" value="ALT_INIT"/>
    <property type="molecule type" value="mRNA"/>
</dbReference>
<dbReference type="RefSeq" id="NP_198542.1">
    <property type="nucleotide sequence ID" value="NM_123085.3"/>
</dbReference>
<dbReference type="SMR" id="F4K5X6"/>
<dbReference type="BioGRID" id="18951">
    <property type="interactions" value="123"/>
</dbReference>
<dbReference type="FunCoup" id="F4K5X6">
    <property type="interactions" value="3"/>
</dbReference>
<dbReference type="IntAct" id="F4K5X6">
    <property type="interactions" value="100"/>
</dbReference>
<dbReference type="STRING" id="3702.F4K5X6"/>
<dbReference type="iPTMnet" id="F4K5X6"/>
<dbReference type="PaxDb" id="3702-AT5G37260.1"/>
<dbReference type="EnsemblPlants" id="AT5G37260.1">
    <property type="protein sequence ID" value="AT5G37260.1"/>
    <property type="gene ID" value="AT5G37260"/>
</dbReference>
<dbReference type="GeneID" id="833700"/>
<dbReference type="Gramene" id="AT5G37260.1">
    <property type="protein sequence ID" value="AT5G37260.1"/>
    <property type="gene ID" value="AT5G37260"/>
</dbReference>
<dbReference type="KEGG" id="ath:AT5G37260"/>
<dbReference type="Araport" id="AT5G37260"/>
<dbReference type="TAIR" id="AT5G37260">
    <property type="gene designation" value="RVE2"/>
</dbReference>
<dbReference type="eggNOG" id="KOG0724">
    <property type="taxonomic scope" value="Eukaryota"/>
</dbReference>
<dbReference type="HOGENOM" id="CLU_030536_0_0_1"/>
<dbReference type="InParanoid" id="F4K5X6"/>
<dbReference type="OMA" id="MAMQERC"/>
<dbReference type="PRO" id="PR:F4K5X6"/>
<dbReference type="Proteomes" id="UP000006548">
    <property type="component" value="Chromosome 5"/>
</dbReference>
<dbReference type="ExpressionAtlas" id="F4K5X6">
    <property type="expression patterns" value="baseline and differential"/>
</dbReference>
<dbReference type="GO" id="GO:0005634">
    <property type="term" value="C:nucleus"/>
    <property type="evidence" value="ECO:0007669"/>
    <property type="project" value="UniProtKB-SubCell"/>
</dbReference>
<dbReference type="GO" id="GO:0003677">
    <property type="term" value="F:DNA binding"/>
    <property type="evidence" value="ECO:0007669"/>
    <property type="project" value="UniProtKB-KW"/>
</dbReference>
<dbReference type="GO" id="GO:0003700">
    <property type="term" value="F:DNA-binding transcription factor activity"/>
    <property type="evidence" value="ECO:0000250"/>
    <property type="project" value="TAIR"/>
</dbReference>
<dbReference type="GO" id="GO:0007623">
    <property type="term" value="P:circadian rhythm"/>
    <property type="evidence" value="ECO:0000270"/>
    <property type="project" value="TAIR"/>
</dbReference>
<dbReference type="GO" id="GO:0006355">
    <property type="term" value="P:regulation of DNA-templated transcription"/>
    <property type="evidence" value="ECO:0000304"/>
    <property type="project" value="TAIR"/>
</dbReference>
<dbReference type="GO" id="GO:0009909">
    <property type="term" value="P:regulation of flower development"/>
    <property type="evidence" value="ECO:0000315"/>
    <property type="project" value="TAIR"/>
</dbReference>
<dbReference type="GO" id="GO:0009845">
    <property type="term" value="P:seed germination"/>
    <property type="evidence" value="ECO:0000315"/>
    <property type="project" value="TAIR"/>
</dbReference>
<dbReference type="CDD" id="cd00167">
    <property type="entry name" value="SANT"/>
    <property type="match status" value="1"/>
</dbReference>
<dbReference type="FunFam" id="1.10.10.60:FF:000023">
    <property type="entry name" value="protein REVEILLE 6 isoform X1"/>
    <property type="match status" value="1"/>
</dbReference>
<dbReference type="Gene3D" id="1.10.10.60">
    <property type="entry name" value="Homeodomain-like"/>
    <property type="match status" value="1"/>
</dbReference>
<dbReference type="InterPro" id="IPR009057">
    <property type="entry name" value="Homeodomain-like_sf"/>
</dbReference>
<dbReference type="InterPro" id="IPR017930">
    <property type="entry name" value="Myb_dom"/>
</dbReference>
<dbReference type="InterPro" id="IPR006447">
    <property type="entry name" value="Myb_dom_plants"/>
</dbReference>
<dbReference type="InterPro" id="IPR001005">
    <property type="entry name" value="SANT/Myb"/>
</dbReference>
<dbReference type="InterPro" id="IPR017884">
    <property type="entry name" value="SANT_dom"/>
</dbReference>
<dbReference type="NCBIfam" id="TIGR01557">
    <property type="entry name" value="myb_SHAQKYF"/>
    <property type="match status" value="1"/>
</dbReference>
<dbReference type="PANTHER" id="PTHR12802:SF175">
    <property type="entry name" value="PROTEIN REVEILLE 2"/>
    <property type="match status" value="1"/>
</dbReference>
<dbReference type="PANTHER" id="PTHR12802">
    <property type="entry name" value="SWI/SNF COMPLEX-RELATED"/>
    <property type="match status" value="1"/>
</dbReference>
<dbReference type="Pfam" id="PF00249">
    <property type="entry name" value="Myb_DNA-binding"/>
    <property type="match status" value="1"/>
</dbReference>
<dbReference type="SMART" id="SM00717">
    <property type="entry name" value="SANT"/>
    <property type="match status" value="1"/>
</dbReference>
<dbReference type="SUPFAM" id="SSF46689">
    <property type="entry name" value="Homeodomain-like"/>
    <property type="match status" value="1"/>
</dbReference>
<dbReference type="PROSITE" id="PS51294">
    <property type="entry name" value="HTH_MYB"/>
    <property type="match status" value="1"/>
</dbReference>
<sequence length="287" mass="32436">MAMQERCESLCSDELISSSDAFYLKTRKPYTITKQREKWTEAEHEKFVEALKLYGRAWRRIEEHVGTKTAVQIRSHAQKFFTKVARDFGVSSESIEIPPPRPKRKPMHPYPRKLVIPDAKEMVYAELTGSKLIQDEDNRSPTSVLSAHGSDGLGSIGSNSPNSSSAELSSHTEESLSLEAETKQSLKLFGKTFVVGDYNSSMSCDDSEDGKKKLYSETQSLQCSSSTSENAETEVVVSEFKRSERSAFSQLKSSVTEMNNMRGFMPYKKRVKVEENIDNVKLSYPLW</sequence>
<reference key="1">
    <citation type="submission" date="2004-01" db="EMBL/GenBank/DDBJ databases">
        <title>The MYB transcription factor family in Arabidopsis: a genome-wide cloning and expression pattern analysis.</title>
        <authorList>
            <person name="Qu L."/>
            <person name="Gu H."/>
        </authorList>
    </citation>
    <scope>NUCLEOTIDE SEQUENCE [MRNA]</scope>
</reference>
<reference key="2">
    <citation type="submission" date="1998-08" db="EMBL/GenBank/DDBJ databases">
        <title>Structural analysis of Arabidopsis thaliana chromosome 5. XI.</title>
        <authorList>
            <person name="Kaneko T."/>
            <person name="Katoh T."/>
            <person name="Asamizu E."/>
            <person name="Sato S."/>
            <person name="Nakamura Y."/>
            <person name="Kotani H."/>
            <person name="Tabata S."/>
        </authorList>
    </citation>
    <scope>NUCLEOTIDE SEQUENCE [LARGE SCALE GENOMIC DNA]</scope>
    <source>
        <strain>cv. Columbia</strain>
    </source>
</reference>
<reference key="3">
    <citation type="journal article" date="2017" name="Plant J.">
        <title>Araport11: a complete reannotation of the Arabidopsis thaliana reference genome.</title>
        <authorList>
            <person name="Cheng C.Y."/>
            <person name="Krishnakumar V."/>
            <person name="Chan A.P."/>
            <person name="Thibaud-Nissen F."/>
            <person name="Schobel S."/>
            <person name="Town C.D."/>
        </authorList>
    </citation>
    <scope>GENOME REANNOTATION</scope>
    <source>
        <strain>cv. Columbia</strain>
    </source>
</reference>
<reference key="4">
    <citation type="submission" date="2004-02" db="EMBL/GenBank/DDBJ databases">
        <title>Arabidopsis ORF clones.</title>
        <authorList>
            <person name="Kim C.J."/>
            <person name="Chen H."/>
            <person name="Cheuk R."/>
            <person name="Shinn P."/>
            <person name="Ecker J.R."/>
        </authorList>
    </citation>
    <scope>NUCLEOTIDE SEQUENCE [LARGE SCALE MRNA] OF 7-287</scope>
</reference>
<reference key="5">
    <citation type="journal article" date="2007" name="Plant J.">
        <title>Constitutive expression of CIR1 (RVE2) affects several circadian-regulated processes and seed germination in Arabidopsis.</title>
        <authorList>
            <person name="Zhang X."/>
            <person name="Chen Y."/>
            <person name="Wang Z.Y."/>
            <person name="Chen Z."/>
            <person name="Gu H."/>
            <person name="Qu L.J."/>
        </authorList>
    </citation>
    <scope>FUNCTION</scope>
    <scope>INDUCTION</scope>
    <scope>DISRUPTION PHENOTYPE</scope>
</reference>
<reference key="6">
    <citation type="journal article" date="2009" name="Proc. Natl. Acad. Sci. U.S.A.">
        <title>REVEILLE1, a Myb-like transcription factor, integrates the circadian clock and auxin pathways.</title>
        <authorList>
            <person name="Rawat R."/>
            <person name="Schwartz J."/>
            <person name="Jones M.A."/>
            <person name="Sairanen I."/>
            <person name="Cheng Y."/>
            <person name="Andersson C.R."/>
            <person name="Zhao Y."/>
            <person name="Ljung K."/>
            <person name="Harmer S.L."/>
        </authorList>
    </citation>
    <scope>INDUCTION</scope>
    <scope>DISRUPTION PHENOTYPE</scope>
    <scope>GENE FAMILY</scope>
    <scope>NOMENCLATURE</scope>
</reference>
<reference key="7">
    <citation type="journal article" date="2012" name="Biol. Direct">
        <title>Unproductive alternative splicing and nonsense mRNAs: a widespread phenomenon among plant circadian clock genes.</title>
        <authorList>
            <person name="Filichkin S.A."/>
            <person name="Mockler T.C."/>
        </authorList>
    </citation>
    <scope>ALTERNATIVE SPLICING</scope>
    <scope>REGULATION</scope>
</reference>
<reference key="8">
    <citation type="journal article" date="2013" name="Plant Cell">
        <title>A DEAD box RNA helicase is critical for pre-mRNA splicing, cold-responsive gene regulation, and cold tolerance in Arabidopsis.</title>
        <authorList>
            <person name="Guan Q."/>
            <person name="Wu J."/>
            <person name="Zhang Y."/>
            <person name="Jiang C."/>
            <person name="Liu R."/>
            <person name="Chai C."/>
            <person name="Zhu J."/>
        </authorList>
    </citation>
    <scope>FUNCTION</scope>
    <scope>DISRUPTION PHENOTYPE</scope>
    <scope>REGULATION</scope>
</reference>
<proteinExistence type="evidence at protein level"/>
<gene>
    <name type="primary">RVE2</name>
    <name type="synonym">CIR1</name>
    <name type="ordered locus">At5g37260</name>
    <name type="ORF">MNJ8.4</name>
</gene>